<name>GSA_CORJK</name>
<feature type="chain" id="PRO_0000243565" description="Glutamate-1-semialdehyde 2,1-aminomutase">
    <location>
        <begin position="1"/>
        <end position="443"/>
    </location>
</feature>
<feature type="region of interest" description="Disordered" evidence="2">
    <location>
        <begin position="1"/>
        <end position="22"/>
    </location>
</feature>
<feature type="compositionally biased region" description="Low complexity" evidence="2">
    <location>
        <begin position="1"/>
        <end position="16"/>
    </location>
</feature>
<feature type="modified residue" description="N6-(pyridoxal phosphate)lysine" evidence="1">
    <location>
        <position position="277"/>
    </location>
</feature>
<reference key="1">
    <citation type="journal article" date="2005" name="J. Bacteriol.">
        <title>Complete genome sequence and analysis of the multiresistant nosocomial pathogen Corynebacterium jeikeium K411, a lipid-requiring bacterium of the human skin flora.</title>
        <authorList>
            <person name="Tauch A."/>
            <person name="Kaiser O."/>
            <person name="Hain T."/>
            <person name="Goesmann A."/>
            <person name="Weisshaar B."/>
            <person name="Albersmeier A."/>
            <person name="Bekel T."/>
            <person name="Bischoff N."/>
            <person name="Brune I."/>
            <person name="Chakraborty T."/>
            <person name="Kalinowski J."/>
            <person name="Meyer F."/>
            <person name="Rupp O."/>
            <person name="Schneiker S."/>
            <person name="Viehoever P."/>
            <person name="Puehler A."/>
        </authorList>
    </citation>
    <scope>NUCLEOTIDE SEQUENCE [LARGE SCALE GENOMIC DNA]</scope>
    <source>
        <strain>K411</strain>
    </source>
</reference>
<accession>Q4JSY1</accession>
<keyword id="KW-0963">Cytoplasm</keyword>
<keyword id="KW-0413">Isomerase</keyword>
<keyword id="KW-0627">Porphyrin biosynthesis</keyword>
<keyword id="KW-0663">Pyridoxal phosphate</keyword>
<keyword id="KW-1185">Reference proteome</keyword>
<sequence>MSVNADSQHSNNSSHQASEKAFDRARSLIPGGVNSPVRAFGSVGGTPPFITSAQGSTLHDVDGNSYVDLFCSWGPMIHGHAHPQIVEAVREAAGHGLSFGAPTTMEVDLVEEIDRRTSVEKARLVNSGTEATMSAIRLARGYTGRDKILKFEGCYHGHVDSLLVAAGSGVATFGLPDSPGITKAAAGDTVVVPYRDVQAVEDAFASHEGEIAAIIVEGAAGNMGTVNPRGFNAELQRIAHENGALLIVDEVMTGFRVSESGWYGKDGVAGDLTTFGKVVSGGLPAAAFGGKAEIMDHLAPVGPVYQAGTLSGNPVAVASGLASLKLADAAAYQTLDANADALAGILSDALTKASVAHHIQRAGSMLSVRFAEGEGANFADMKAADTFRYPAFFHAFLDHGVFAPPSVFETWFVSTALTGADFEKIAAAATPAAEAAAAATPSA</sequence>
<protein>
    <recommendedName>
        <fullName evidence="1">Glutamate-1-semialdehyde 2,1-aminomutase</fullName>
        <shortName evidence="1">GSA</shortName>
        <ecNumber evidence="1">5.4.3.8</ecNumber>
    </recommendedName>
    <alternativeName>
        <fullName evidence="1">Glutamate-1-semialdehyde aminotransferase</fullName>
        <shortName evidence="1">GSA-AT</shortName>
    </alternativeName>
</protein>
<gene>
    <name evidence="1" type="primary">hemL</name>
    <name type="ordered locus">jk1895</name>
</gene>
<proteinExistence type="inferred from homology"/>
<organism>
    <name type="scientific">Corynebacterium jeikeium (strain K411)</name>
    <dbReference type="NCBI Taxonomy" id="306537"/>
    <lineage>
        <taxon>Bacteria</taxon>
        <taxon>Bacillati</taxon>
        <taxon>Actinomycetota</taxon>
        <taxon>Actinomycetes</taxon>
        <taxon>Mycobacteriales</taxon>
        <taxon>Corynebacteriaceae</taxon>
        <taxon>Corynebacterium</taxon>
    </lineage>
</organism>
<dbReference type="EC" id="5.4.3.8" evidence="1"/>
<dbReference type="EMBL" id="CR931997">
    <property type="protein sequence ID" value="CAI38076.1"/>
    <property type="molecule type" value="Genomic_DNA"/>
</dbReference>
<dbReference type="RefSeq" id="WP_011274203.1">
    <property type="nucleotide sequence ID" value="NC_007164.1"/>
</dbReference>
<dbReference type="SMR" id="Q4JSY1"/>
<dbReference type="STRING" id="306537.jk1895"/>
<dbReference type="KEGG" id="cjk:jk1895"/>
<dbReference type="PATRIC" id="fig|306537.10.peg.1922"/>
<dbReference type="eggNOG" id="COG0001">
    <property type="taxonomic scope" value="Bacteria"/>
</dbReference>
<dbReference type="HOGENOM" id="CLU_016922_1_5_11"/>
<dbReference type="OrthoDB" id="9801052at2"/>
<dbReference type="UniPathway" id="UPA00251">
    <property type="reaction ID" value="UER00317"/>
</dbReference>
<dbReference type="Proteomes" id="UP000000545">
    <property type="component" value="Chromosome"/>
</dbReference>
<dbReference type="GO" id="GO:0005737">
    <property type="term" value="C:cytoplasm"/>
    <property type="evidence" value="ECO:0007669"/>
    <property type="project" value="UniProtKB-SubCell"/>
</dbReference>
<dbReference type="GO" id="GO:0042286">
    <property type="term" value="F:glutamate-1-semialdehyde 2,1-aminomutase activity"/>
    <property type="evidence" value="ECO:0007669"/>
    <property type="project" value="UniProtKB-UniRule"/>
</dbReference>
<dbReference type="GO" id="GO:0030170">
    <property type="term" value="F:pyridoxal phosphate binding"/>
    <property type="evidence" value="ECO:0007669"/>
    <property type="project" value="InterPro"/>
</dbReference>
<dbReference type="GO" id="GO:0008483">
    <property type="term" value="F:transaminase activity"/>
    <property type="evidence" value="ECO:0007669"/>
    <property type="project" value="InterPro"/>
</dbReference>
<dbReference type="GO" id="GO:0006782">
    <property type="term" value="P:protoporphyrinogen IX biosynthetic process"/>
    <property type="evidence" value="ECO:0007669"/>
    <property type="project" value="UniProtKB-UniRule"/>
</dbReference>
<dbReference type="CDD" id="cd00610">
    <property type="entry name" value="OAT_like"/>
    <property type="match status" value="1"/>
</dbReference>
<dbReference type="FunFam" id="3.40.640.10:FF:000021">
    <property type="entry name" value="Glutamate-1-semialdehyde 2,1-aminomutase"/>
    <property type="match status" value="1"/>
</dbReference>
<dbReference type="Gene3D" id="3.90.1150.10">
    <property type="entry name" value="Aspartate Aminotransferase, domain 1"/>
    <property type="match status" value="1"/>
</dbReference>
<dbReference type="Gene3D" id="3.40.640.10">
    <property type="entry name" value="Type I PLP-dependent aspartate aminotransferase-like (Major domain)"/>
    <property type="match status" value="1"/>
</dbReference>
<dbReference type="HAMAP" id="MF_00375">
    <property type="entry name" value="HemL_aminotrans_3"/>
    <property type="match status" value="1"/>
</dbReference>
<dbReference type="InterPro" id="IPR004639">
    <property type="entry name" value="4pyrrol_synth_GluAld_NH2Trfase"/>
</dbReference>
<dbReference type="InterPro" id="IPR005814">
    <property type="entry name" value="Aminotrans_3"/>
</dbReference>
<dbReference type="InterPro" id="IPR049704">
    <property type="entry name" value="Aminotrans_3_PPA_site"/>
</dbReference>
<dbReference type="InterPro" id="IPR015424">
    <property type="entry name" value="PyrdxlP-dep_Trfase"/>
</dbReference>
<dbReference type="InterPro" id="IPR015421">
    <property type="entry name" value="PyrdxlP-dep_Trfase_major"/>
</dbReference>
<dbReference type="InterPro" id="IPR015422">
    <property type="entry name" value="PyrdxlP-dep_Trfase_small"/>
</dbReference>
<dbReference type="NCBIfam" id="TIGR00713">
    <property type="entry name" value="hemL"/>
    <property type="match status" value="1"/>
</dbReference>
<dbReference type="NCBIfam" id="NF000818">
    <property type="entry name" value="PRK00062.1"/>
    <property type="match status" value="1"/>
</dbReference>
<dbReference type="PANTHER" id="PTHR43713">
    <property type="entry name" value="GLUTAMATE-1-SEMIALDEHYDE 2,1-AMINOMUTASE"/>
    <property type="match status" value="1"/>
</dbReference>
<dbReference type="PANTHER" id="PTHR43713:SF3">
    <property type="entry name" value="GLUTAMATE-1-SEMIALDEHYDE 2,1-AMINOMUTASE 1, CHLOROPLASTIC-RELATED"/>
    <property type="match status" value="1"/>
</dbReference>
<dbReference type="Pfam" id="PF00202">
    <property type="entry name" value="Aminotran_3"/>
    <property type="match status" value="1"/>
</dbReference>
<dbReference type="SUPFAM" id="SSF53383">
    <property type="entry name" value="PLP-dependent transferases"/>
    <property type="match status" value="1"/>
</dbReference>
<dbReference type="PROSITE" id="PS00600">
    <property type="entry name" value="AA_TRANSFER_CLASS_3"/>
    <property type="match status" value="1"/>
</dbReference>
<comment type="catalytic activity">
    <reaction evidence="1">
        <text>(S)-4-amino-5-oxopentanoate = 5-aminolevulinate</text>
        <dbReference type="Rhea" id="RHEA:14265"/>
        <dbReference type="ChEBI" id="CHEBI:57501"/>
        <dbReference type="ChEBI" id="CHEBI:356416"/>
        <dbReference type="EC" id="5.4.3.8"/>
    </reaction>
</comment>
<comment type="cofactor">
    <cofactor evidence="1">
        <name>pyridoxal 5'-phosphate</name>
        <dbReference type="ChEBI" id="CHEBI:597326"/>
    </cofactor>
</comment>
<comment type="pathway">
    <text evidence="1">Porphyrin-containing compound metabolism; protoporphyrin-IX biosynthesis; 5-aminolevulinate from L-glutamyl-tRNA(Glu): step 2/2.</text>
</comment>
<comment type="subunit">
    <text evidence="1">Homodimer.</text>
</comment>
<comment type="subcellular location">
    <subcellularLocation>
        <location evidence="1">Cytoplasm</location>
    </subcellularLocation>
</comment>
<comment type="similarity">
    <text evidence="1">Belongs to the class-III pyridoxal-phosphate-dependent aminotransferase family. HemL subfamily.</text>
</comment>
<evidence type="ECO:0000255" key="1">
    <source>
        <dbReference type="HAMAP-Rule" id="MF_00375"/>
    </source>
</evidence>
<evidence type="ECO:0000256" key="2">
    <source>
        <dbReference type="SAM" id="MobiDB-lite"/>
    </source>
</evidence>